<feature type="chain" id="PRO_1000078093" description="Uroporphyrinogen decarboxylase">
    <location>
        <begin position="1"/>
        <end position="345"/>
    </location>
</feature>
<feature type="binding site" evidence="1">
    <location>
        <begin position="27"/>
        <end position="31"/>
    </location>
    <ligand>
        <name>substrate</name>
    </ligand>
</feature>
<feature type="binding site" evidence="1">
    <location>
        <position position="46"/>
    </location>
    <ligand>
        <name>substrate</name>
    </ligand>
</feature>
<feature type="binding site" evidence="1">
    <location>
        <position position="76"/>
    </location>
    <ligand>
        <name>substrate</name>
    </ligand>
</feature>
<feature type="binding site" evidence="1">
    <location>
        <position position="152"/>
    </location>
    <ligand>
        <name>substrate</name>
    </ligand>
</feature>
<feature type="binding site" evidence="1">
    <location>
        <position position="207"/>
    </location>
    <ligand>
        <name>substrate</name>
    </ligand>
</feature>
<feature type="binding site" evidence="1">
    <location>
        <position position="321"/>
    </location>
    <ligand>
        <name>substrate</name>
    </ligand>
</feature>
<feature type="site" description="Transition state stabilizer" evidence="1">
    <location>
        <position position="76"/>
    </location>
</feature>
<name>DCUP_STAA9</name>
<keyword id="KW-0963">Cytoplasm</keyword>
<keyword id="KW-0210">Decarboxylase</keyword>
<keyword id="KW-0456">Lyase</keyword>
<keyword id="KW-0627">Porphyrin biosynthesis</keyword>
<gene>
    <name evidence="1" type="primary">hemE</name>
    <name type="ordered locus">SaurJH9_1887</name>
</gene>
<sequence length="345" mass="39352">MVHNKNNTILKMIKGEETSHTPVWFMRQAGRSQPEYRKLKEKYSLFDITHQPELCAYVTHLPVDNYHTDAAILYKDIMTPLKPIGVDVEIKSGIGPVIHNPIKTIQDVEKLSQIDPERDVPYVLDTIKLLTEEKLNVPLIGFTGAPFTLASYMIEGGPSKNYNFTKAMMYRDEATWFALMNHLVDVSVKYVTAQVEAGAELIQIFDSWVGALNVEDYRRYIKPHMIRLISEVKEKHDVPVILFGVGASHLINEWNDLPIDVLGLDWRTSINQAQQLGVTKTLQGNLDPSILLAPWNVIEERLKPILDQGMENGKHIFNLGHGVFPEVQPETLRKVSEFVHTYTQR</sequence>
<evidence type="ECO:0000255" key="1">
    <source>
        <dbReference type="HAMAP-Rule" id="MF_00218"/>
    </source>
</evidence>
<protein>
    <recommendedName>
        <fullName evidence="1">Uroporphyrinogen decarboxylase</fullName>
        <shortName evidence="1">UPD</shortName>
        <shortName evidence="1">URO-D</shortName>
        <ecNumber evidence="1">4.1.1.37</ecNumber>
    </recommendedName>
</protein>
<accession>A5ITZ9</accession>
<organism>
    <name type="scientific">Staphylococcus aureus (strain JH9)</name>
    <dbReference type="NCBI Taxonomy" id="359786"/>
    <lineage>
        <taxon>Bacteria</taxon>
        <taxon>Bacillati</taxon>
        <taxon>Bacillota</taxon>
        <taxon>Bacilli</taxon>
        <taxon>Bacillales</taxon>
        <taxon>Staphylococcaceae</taxon>
        <taxon>Staphylococcus</taxon>
    </lineage>
</organism>
<comment type="function">
    <text evidence="1">Catalyzes the decarboxylation of four acetate groups of uroporphyrinogen-III to yield coproporphyrinogen-III.</text>
</comment>
<comment type="catalytic activity">
    <reaction evidence="1">
        <text>uroporphyrinogen III + 4 H(+) = coproporphyrinogen III + 4 CO2</text>
        <dbReference type="Rhea" id="RHEA:19865"/>
        <dbReference type="ChEBI" id="CHEBI:15378"/>
        <dbReference type="ChEBI" id="CHEBI:16526"/>
        <dbReference type="ChEBI" id="CHEBI:57308"/>
        <dbReference type="ChEBI" id="CHEBI:57309"/>
        <dbReference type="EC" id="4.1.1.37"/>
    </reaction>
</comment>
<comment type="pathway">
    <text evidence="1">Porphyrin-containing compound metabolism; protoporphyrin-IX biosynthesis; coproporphyrinogen-III from 5-aminolevulinate: step 4/4.</text>
</comment>
<comment type="subunit">
    <text evidence="1">Homodimer.</text>
</comment>
<comment type="subcellular location">
    <subcellularLocation>
        <location evidence="1">Cytoplasm</location>
    </subcellularLocation>
</comment>
<comment type="similarity">
    <text evidence="1">Belongs to the uroporphyrinogen decarboxylase family.</text>
</comment>
<reference key="1">
    <citation type="submission" date="2007-05" db="EMBL/GenBank/DDBJ databases">
        <title>Complete sequence of chromosome of Staphylococcus aureus subsp. aureus JH9.</title>
        <authorList>
            <consortium name="US DOE Joint Genome Institute"/>
            <person name="Copeland A."/>
            <person name="Lucas S."/>
            <person name="Lapidus A."/>
            <person name="Barry K."/>
            <person name="Detter J.C."/>
            <person name="Glavina del Rio T."/>
            <person name="Hammon N."/>
            <person name="Israni S."/>
            <person name="Pitluck S."/>
            <person name="Chain P."/>
            <person name="Malfatti S."/>
            <person name="Shin M."/>
            <person name="Vergez L."/>
            <person name="Schmutz J."/>
            <person name="Larimer F."/>
            <person name="Land M."/>
            <person name="Hauser L."/>
            <person name="Kyrpides N."/>
            <person name="Kim E."/>
            <person name="Tomasz A."/>
            <person name="Richardson P."/>
        </authorList>
    </citation>
    <scope>NUCLEOTIDE SEQUENCE [LARGE SCALE GENOMIC DNA]</scope>
    <source>
        <strain>JH9</strain>
    </source>
</reference>
<dbReference type="EC" id="4.1.1.37" evidence="1"/>
<dbReference type="EMBL" id="CP000703">
    <property type="protein sequence ID" value="ABQ49672.1"/>
    <property type="molecule type" value="Genomic_DNA"/>
</dbReference>
<dbReference type="RefSeq" id="WP_000233526.1">
    <property type="nucleotide sequence ID" value="NC_009487.1"/>
</dbReference>
<dbReference type="SMR" id="A5ITZ9"/>
<dbReference type="KEGG" id="saj:SaurJH9_1887"/>
<dbReference type="HOGENOM" id="CLU_040933_0_1_9"/>
<dbReference type="UniPathway" id="UPA00251">
    <property type="reaction ID" value="UER00321"/>
</dbReference>
<dbReference type="GO" id="GO:0005829">
    <property type="term" value="C:cytosol"/>
    <property type="evidence" value="ECO:0007669"/>
    <property type="project" value="TreeGrafter"/>
</dbReference>
<dbReference type="GO" id="GO:0004853">
    <property type="term" value="F:uroporphyrinogen decarboxylase activity"/>
    <property type="evidence" value="ECO:0007669"/>
    <property type="project" value="UniProtKB-UniRule"/>
</dbReference>
<dbReference type="GO" id="GO:0006782">
    <property type="term" value="P:protoporphyrinogen IX biosynthetic process"/>
    <property type="evidence" value="ECO:0007669"/>
    <property type="project" value="UniProtKB-UniRule"/>
</dbReference>
<dbReference type="CDD" id="cd00717">
    <property type="entry name" value="URO-D"/>
    <property type="match status" value="1"/>
</dbReference>
<dbReference type="FunFam" id="3.20.20.210:FF:000005">
    <property type="entry name" value="Uroporphyrinogen decarboxylase"/>
    <property type="match status" value="1"/>
</dbReference>
<dbReference type="Gene3D" id="3.20.20.210">
    <property type="match status" value="1"/>
</dbReference>
<dbReference type="HAMAP" id="MF_00218">
    <property type="entry name" value="URO_D"/>
    <property type="match status" value="1"/>
</dbReference>
<dbReference type="InterPro" id="IPR038071">
    <property type="entry name" value="UROD/MetE-like_sf"/>
</dbReference>
<dbReference type="InterPro" id="IPR006361">
    <property type="entry name" value="Uroporphyrinogen_deCO2ase_HemE"/>
</dbReference>
<dbReference type="InterPro" id="IPR000257">
    <property type="entry name" value="Uroporphyrinogen_deCOase"/>
</dbReference>
<dbReference type="NCBIfam" id="TIGR01464">
    <property type="entry name" value="hemE"/>
    <property type="match status" value="1"/>
</dbReference>
<dbReference type="PANTHER" id="PTHR21091">
    <property type="entry name" value="METHYLTETRAHYDROFOLATE:HOMOCYSTEINE METHYLTRANSFERASE RELATED"/>
    <property type="match status" value="1"/>
</dbReference>
<dbReference type="PANTHER" id="PTHR21091:SF169">
    <property type="entry name" value="UROPORPHYRINOGEN DECARBOXYLASE"/>
    <property type="match status" value="1"/>
</dbReference>
<dbReference type="Pfam" id="PF01208">
    <property type="entry name" value="URO-D"/>
    <property type="match status" value="1"/>
</dbReference>
<dbReference type="SUPFAM" id="SSF51726">
    <property type="entry name" value="UROD/MetE-like"/>
    <property type="match status" value="1"/>
</dbReference>
<dbReference type="PROSITE" id="PS00906">
    <property type="entry name" value="UROD_1"/>
    <property type="match status" value="1"/>
</dbReference>
<dbReference type="PROSITE" id="PS00907">
    <property type="entry name" value="UROD_2"/>
    <property type="match status" value="1"/>
</dbReference>
<proteinExistence type="inferred from homology"/>